<accession>B7GMF0</accession>
<feature type="chain" id="PRO_0000376124" description="NADH-quinone oxidoreductase subunit B">
    <location>
        <begin position="1"/>
        <end position="177"/>
    </location>
</feature>
<feature type="binding site" evidence="1">
    <location>
        <position position="53"/>
    </location>
    <ligand>
        <name>[4Fe-4S] cluster</name>
        <dbReference type="ChEBI" id="CHEBI:49883"/>
    </ligand>
</feature>
<feature type="binding site" evidence="1">
    <location>
        <position position="54"/>
    </location>
    <ligand>
        <name>[4Fe-4S] cluster</name>
        <dbReference type="ChEBI" id="CHEBI:49883"/>
    </ligand>
</feature>
<feature type="binding site" evidence="1">
    <location>
        <position position="118"/>
    </location>
    <ligand>
        <name>[4Fe-4S] cluster</name>
        <dbReference type="ChEBI" id="CHEBI:49883"/>
    </ligand>
</feature>
<feature type="binding site" evidence="1">
    <location>
        <position position="148"/>
    </location>
    <ligand>
        <name>[4Fe-4S] cluster</name>
        <dbReference type="ChEBI" id="CHEBI:49883"/>
    </ligand>
</feature>
<proteinExistence type="inferred from homology"/>
<sequence length="177" mass="19804">MEEEGVKMDVKLLNVSDQEMEEMRRNVFLTTLEQLKAWARSNSLWPLTFGLACCAIEMMGVGSSHYDLDRFGSFFRTSPRQSDVMIVSGTVTKKMAPIVRRLYDQMPEPKWVIAMGSCATAGGPYVKSYCVVKGVDQIVPVDVYIPGCPPNPAALIYGINKLKEKIRYEAKTGKKVL</sequence>
<protein>
    <recommendedName>
        <fullName evidence="1">NADH-quinone oxidoreductase subunit B</fullName>
        <ecNumber evidence="1">7.1.1.-</ecNumber>
    </recommendedName>
    <alternativeName>
        <fullName evidence="1">NADH dehydrogenase I subunit B</fullName>
    </alternativeName>
    <alternativeName>
        <fullName evidence="1">NDH-1 subunit B</fullName>
    </alternativeName>
</protein>
<organism>
    <name type="scientific">Anoxybacillus flavithermus (strain DSM 21510 / WK1)</name>
    <dbReference type="NCBI Taxonomy" id="491915"/>
    <lineage>
        <taxon>Bacteria</taxon>
        <taxon>Bacillati</taxon>
        <taxon>Bacillota</taxon>
        <taxon>Bacilli</taxon>
        <taxon>Bacillales</taxon>
        <taxon>Anoxybacillaceae</taxon>
        <taxon>Anoxybacillus</taxon>
    </lineage>
</organism>
<gene>
    <name evidence="1" type="primary">nuoB</name>
    <name type="ordered locus">Aflv_2699</name>
</gene>
<keyword id="KW-0004">4Fe-4S</keyword>
<keyword id="KW-1003">Cell membrane</keyword>
<keyword id="KW-0408">Iron</keyword>
<keyword id="KW-0411">Iron-sulfur</keyword>
<keyword id="KW-0472">Membrane</keyword>
<keyword id="KW-0479">Metal-binding</keyword>
<keyword id="KW-0520">NAD</keyword>
<keyword id="KW-0874">Quinone</keyword>
<keyword id="KW-1278">Translocase</keyword>
<keyword id="KW-0813">Transport</keyword>
<reference key="1">
    <citation type="journal article" date="2008" name="Genome Biol.">
        <title>Encapsulated in silica: genome, proteome and physiology of the thermophilic bacterium Anoxybacillus flavithermus WK1.</title>
        <authorList>
            <person name="Saw J.H."/>
            <person name="Mountain B.W."/>
            <person name="Feng L."/>
            <person name="Omelchenko M.V."/>
            <person name="Hou S."/>
            <person name="Saito J.A."/>
            <person name="Stott M.B."/>
            <person name="Li D."/>
            <person name="Zhao G."/>
            <person name="Wu J."/>
            <person name="Galperin M.Y."/>
            <person name="Koonin E.V."/>
            <person name="Makarova K.S."/>
            <person name="Wolf Y.I."/>
            <person name="Rigden D.J."/>
            <person name="Dunfield P.F."/>
            <person name="Wang L."/>
            <person name="Alam M."/>
        </authorList>
    </citation>
    <scope>NUCLEOTIDE SEQUENCE [LARGE SCALE GENOMIC DNA]</scope>
    <source>
        <strain>DSM 21510 / WK1</strain>
    </source>
</reference>
<name>NUOB_ANOFW</name>
<dbReference type="EC" id="7.1.1.-" evidence="1"/>
<dbReference type="EMBL" id="CP000922">
    <property type="protein sequence ID" value="ACJ35052.1"/>
    <property type="molecule type" value="Genomic_DNA"/>
</dbReference>
<dbReference type="SMR" id="B7GMF0"/>
<dbReference type="STRING" id="491915.Aflv_2699"/>
<dbReference type="KEGG" id="afl:Aflv_2699"/>
<dbReference type="eggNOG" id="COG0377">
    <property type="taxonomic scope" value="Bacteria"/>
</dbReference>
<dbReference type="HOGENOM" id="CLU_055737_7_3_9"/>
<dbReference type="Proteomes" id="UP000000742">
    <property type="component" value="Chromosome"/>
</dbReference>
<dbReference type="GO" id="GO:0005886">
    <property type="term" value="C:plasma membrane"/>
    <property type="evidence" value="ECO:0007669"/>
    <property type="project" value="UniProtKB-SubCell"/>
</dbReference>
<dbReference type="GO" id="GO:0045271">
    <property type="term" value="C:respiratory chain complex I"/>
    <property type="evidence" value="ECO:0007669"/>
    <property type="project" value="TreeGrafter"/>
</dbReference>
<dbReference type="GO" id="GO:0051539">
    <property type="term" value="F:4 iron, 4 sulfur cluster binding"/>
    <property type="evidence" value="ECO:0007669"/>
    <property type="project" value="UniProtKB-KW"/>
</dbReference>
<dbReference type="GO" id="GO:0005506">
    <property type="term" value="F:iron ion binding"/>
    <property type="evidence" value="ECO:0007669"/>
    <property type="project" value="UniProtKB-UniRule"/>
</dbReference>
<dbReference type="GO" id="GO:0008137">
    <property type="term" value="F:NADH dehydrogenase (ubiquinone) activity"/>
    <property type="evidence" value="ECO:0007669"/>
    <property type="project" value="InterPro"/>
</dbReference>
<dbReference type="GO" id="GO:0050136">
    <property type="term" value="F:NADH:ubiquinone reductase (non-electrogenic) activity"/>
    <property type="evidence" value="ECO:0007669"/>
    <property type="project" value="UniProtKB-UniRule"/>
</dbReference>
<dbReference type="GO" id="GO:0048038">
    <property type="term" value="F:quinone binding"/>
    <property type="evidence" value="ECO:0007669"/>
    <property type="project" value="UniProtKB-KW"/>
</dbReference>
<dbReference type="GO" id="GO:0009060">
    <property type="term" value="P:aerobic respiration"/>
    <property type="evidence" value="ECO:0007669"/>
    <property type="project" value="TreeGrafter"/>
</dbReference>
<dbReference type="GO" id="GO:0015990">
    <property type="term" value="P:electron transport coupled proton transport"/>
    <property type="evidence" value="ECO:0007669"/>
    <property type="project" value="TreeGrafter"/>
</dbReference>
<dbReference type="FunFam" id="3.40.50.12280:FF:000002">
    <property type="entry name" value="NADH-quinone oxidoreductase subunit B"/>
    <property type="match status" value="1"/>
</dbReference>
<dbReference type="Gene3D" id="3.40.50.12280">
    <property type="match status" value="1"/>
</dbReference>
<dbReference type="HAMAP" id="MF_01356">
    <property type="entry name" value="NDH1_NuoB"/>
    <property type="match status" value="1"/>
</dbReference>
<dbReference type="InterPro" id="IPR006137">
    <property type="entry name" value="NADH_UbQ_OxRdtase-like_20kDa"/>
</dbReference>
<dbReference type="InterPro" id="IPR006138">
    <property type="entry name" value="NADH_UQ_OxRdtase_20Kd_su"/>
</dbReference>
<dbReference type="NCBIfam" id="TIGR01957">
    <property type="entry name" value="nuoB_fam"/>
    <property type="match status" value="1"/>
</dbReference>
<dbReference type="NCBIfam" id="NF005012">
    <property type="entry name" value="PRK06411.1"/>
    <property type="match status" value="1"/>
</dbReference>
<dbReference type="PANTHER" id="PTHR11995">
    <property type="entry name" value="NADH DEHYDROGENASE"/>
    <property type="match status" value="1"/>
</dbReference>
<dbReference type="PANTHER" id="PTHR11995:SF14">
    <property type="entry name" value="NADH DEHYDROGENASE [UBIQUINONE] IRON-SULFUR PROTEIN 7, MITOCHONDRIAL"/>
    <property type="match status" value="1"/>
</dbReference>
<dbReference type="Pfam" id="PF01058">
    <property type="entry name" value="Oxidored_q6"/>
    <property type="match status" value="1"/>
</dbReference>
<dbReference type="SUPFAM" id="SSF56770">
    <property type="entry name" value="HydA/Nqo6-like"/>
    <property type="match status" value="1"/>
</dbReference>
<evidence type="ECO:0000255" key="1">
    <source>
        <dbReference type="HAMAP-Rule" id="MF_01356"/>
    </source>
</evidence>
<comment type="function">
    <text evidence="1">NDH-1 shuttles electrons from NADH, via FMN and iron-sulfur (Fe-S) centers, to quinones in the respiratory chain. The immediate electron acceptor for the enzyme in this species is believed to be a menaquinone. Couples the redox reaction to proton translocation (for every two electrons transferred, four hydrogen ions are translocated across the cytoplasmic membrane), and thus conserves the redox energy in a proton gradient.</text>
</comment>
<comment type="catalytic activity">
    <reaction evidence="1">
        <text>a quinone + NADH + 5 H(+)(in) = a quinol + NAD(+) + 4 H(+)(out)</text>
        <dbReference type="Rhea" id="RHEA:57888"/>
        <dbReference type="ChEBI" id="CHEBI:15378"/>
        <dbReference type="ChEBI" id="CHEBI:24646"/>
        <dbReference type="ChEBI" id="CHEBI:57540"/>
        <dbReference type="ChEBI" id="CHEBI:57945"/>
        <dbReference type="ChEBI" id="CHEBI:132124"/>
    </reaction>
</comment>
<comment type="cofactor">
    <cofactor evidence="1">
        <name>[4Fe-4S] cluster</name>
        <dbReference type="ChEBI" id="CHEBI:49883"/>
    </cofactor>
    <text evidence="1">Binds 1 [4Fe-4S] cluster.</text>
</comment>
<comment type="subunit">
    <text evidence="1">NDH-1 is composed of 14 different subunits. Subunits NuoB, C, D, E, F, and G constitute the peripheral sector of the complex.</text>
</comment>
<comment type="subcellular location">
    <subcellularLocation>
        <location evidence="1">Cell membrane</location>
        <topology evidence="1">Peripheral membrane protein</topology>
        <orientation evidence="1">Cytoplasmic side</orientation>
    </subcellularLocation>
</comment>
<comment type="similarity">
    <text evidence="1">Belongs to the complex I 20 kDa subunit family.</text>
</comment>